<evidence type="ECO:0000250" key="1">
    <source>
        <dbReference type="UniProtKB" id="K7WCC7"/>
    </source>
</evidence>
<evidence type="ECO:0000255" key="2"/>
<evidence type="ECO:0000256" key="3">
    <source>
        <dbReference type="SAM" id="MobiDB-lite"/>
    </source>
</evidence>
<evidence type="ECO:0000305" key="4"/>
<evidence type="ECO:0000312" key="5">
    <source>
        <dbReference type="EMBL" id="AAK43503.1"/>
    </source>
</evidence>
<evidence type="ECO:0000312" key="6">
    <source>
        <dbReference type="EMBL" id="AAP54910.1"/>
    </source>
</evidence>
<evidence type="ECO:0000312" key="7">
    <source>
        <dbReference type="EMBL" id="BAF27145.1"/>
    </source>
</evidence>
<keyword id="KW-0150">Chloroplast</keyword>
<keyword id="KW-0934">Plastid</keyword>
<keyword id="KW-1185">Reference proteome</keyword>
<keyword id="KW-0804">Transcription</keyword>
<keyword id="KW-0805">Transcription regulation</keyword>
<keyword id="KW-0809">Transit peptide</keyword>
<protein>
    <recommendedName>
        <fullName evidence="4">UDP-N-acetylmuramoyl-L-alanyl-D-glutamate--2,6-diaminopimelate ligase MurE homolog, chloroplastic</fullName>
    </recommendedName>
</protein>
<sequence length="757" mass="82195">MATAPLAFHLPFPFPSASRPPPRLLPPSRRPPAARLAATRRFRPPTADDEPPEAAEDSSHGLNRYDQLTRHVERARRRQQAEQPEITPDHPLFSSPPSSGEAGSYDPDDEFFDEIDRAIAEKREEFTRRGLIKPSAPAPSQPEEEDGLADELSPEEVIDLDEIRRLQGLSVVSLADEEDEEANGGGGGVDYGDDGVPLDDDGEVFDVADEVGLEGARVRYPAFRMTLAELLDESKLVPVAVTGDQDVALAGVQRDASLVAAGDLYVCVGEEGLAGLTEADKRGAVAVVADQTVDIEGTLACRALVIVDDITAALRMLPACLYRRPSKDMAVIGVAGTDGVTTTAHLVRAMYEAMGVRTGMVGVLGAYAFGNNKLDAQPDASGDPIAVQRLMATMLYNGAEAALLEATTDGMPSSGVDSEIDYDIAVLTNVRHAGDEAGMTYEEYMNSMASLFSRMVDPERHRKVVNIDDPSAPFFAAQGGQDVPVVTYSFENKKADVHTLKYQLSLFETEVLVQTPHGILEISSGLLGRDNIYNILASVAVGVAVGAPLEDIVKGIEEVDAIPGRCELIDEEQAFGVIVDHARTPESLSRLLDGVKELGPRRIVTVIGCCGERERGKRPVMTKVAAEKSDVVMLTSDNPANEDPLDILDDMLAGVGWTMEEYLKHGTNDYYPPLPNGHRIFLHDIRRVAVRAAVAMGEQGDVVVITGKGNDTYQIEVDKKEFFDDREECREALQYVDQLHRAGIDTSEFPWRLPESH</sequence>
<proteinExistence type="inferred from homology"/>
<feature type="transit peptide" description="Chloroplast" evidence="2">
    <location>
        <begin position="1"/>
        <end position="53"/>
    </location>
</feature>
<feature type="chain" id="PRO_0000441846" description="UDP-N-acetylmuramoyl-L-alanyl-D-glutamate--2,6-diaminopimelate ligase MurE homolog, chloroplastic">
    <location>
        <begin position="54"/>
        <end position="757"/>
    </location>
</feature>
<feature type="region of interest" description="Disordered" evidence="3">
    <location>
        <begin position="1"/>
        <end position="112"/>
    </location>
</feature>
<feature type="region of interest" description="Disordered" evidence="3">
    <location>
        <begin position="126"/>
        <end position="152"/>
    </location>
</feature>
<feature type="region of interest" description="Disordered" evidence="3">
    <location>
        <begin position="172"/>
        <end position="195"/>
    </location>
</feature>
<feature type="compositionally biased region" description="Low complexity" evidence="3">
    <location>
        <begin position="1"/>
        <end position="11"/>
    </location>
</feature>
<feature type="compositionally biased region" description="Pro residues" evidence="3">
    <location>
        <begin position="12"/>
        <end position="30"/>
    </location>
</feature>
<feature type="compositionally biased region" description="Acidic residues" evidence="3">
    <location>
        <begin position="47"/>
        <end position="56"/>
    </location>
</feature>
<feature type="compositionally biased region" description="Acidic residues" evidence="3">
    <location>
        <begin position="142"/>
        <end position="152"/>
    </location>
</feature>
<accession>Q94LU9</accession>
<accession>Q7XCG3</accession>
<dbReference type="EMBL" id="AC020666">
    <property type="protein sequence ID" value="AAK43503.1"/>
    <property type="molecule type" value="Genomic_DNA"/>
</dbReference>
<dbReference type="EMBL" id="DP000086">
    <property type="protein sequence ID" value="AAP54910.1"/>
    <property type="molecule type" value="Genomic_DNA"/>
</dbReference>
<dbReference type="EMBL" id="AP008216">
    <property type="protein sequence ID" value="BAF27145.1"/>
    <property type="molecule type" value="Genomic_DNA"/>
</dbReference>
<dbReference type="EMBL" id="AP014966">
    <property type="protein sequence ID" value="BAT11935.1"/>
    <property type="molecule type" value="Genomic_DNA"/>
</dbReference>
<dbReference type="SMR" id="Q94LU9"/>
<dbReference type="FunCoup" id="Q94LU9">
    <property type="interactions" value="428"/>
</dbReference>
<dbReference type="STRING" id="39947.Q94LU9"/>
<dbReference type="PaxDb" id="39947-Q94LU9"/>
<dbReference type="EnsemblPlants" id="Os10t0548900-01">
    <property type="protein sequence ID" value="Os10t0548900-01"/>
    <property type="gene ID" value="Os10g0548900"/>
</dbReference>
<dbReference type="Gramene" id="Os10t0548900-01">
    <property type="protein sequence ID" value="Os10t0548900-01"/>
    <property type="gene ID" value="Os10g0548900"/>
</dbReference>
<dbReference type="KEGG" id="dosa:Os10g0548900"/>
<dbReference type="KEGG" id="osa:4349304"/>
<dbReference type="eggNOG" id="ENOG502QTHZ">
    <property type="taxonomic scope" value="Eukaryota"/>
</dbReference>
<dbReference type="InParanoid" id="Q94LU9"/>
<dbReference type="OMA" id="FLHYDTR"/>
<dbReference type="OrthoDB" id="533138at2759"/>
<dbReference type="PlantReactome" id="R-OSA-1119436">
    <property type="pathway name" value="Peptidoglycan biosynthesis I"/>
</dbReference>
<dbReference type="PlantReactome" id="R-OSA-1119523">
    <property type="pathway name" value="Tetrahydrofolate biosynthesis II"/>
</dbReference>
<dbReference type="PlantReactome" id="R-OSA-1119617">
    <property type="pathway name" value="Folate polyglutamylation I"/>
</dbReference>
<dbReference type="Proteomes" id="UP000000763">
    <property type="component" value="Chromosome 10"/>
</dbReference>
<dbReference type="Proteomes" id="UP000059680">
    <property type="component" value="Chromosome 10"/>
</dbReference>
<dbReference type="ExpressionAtlas" id="Q94LU9">
    <property type="expression patterns" value="baseline and differential"/>
</dbReference>
<dbReference type="GO" id="GO:0009507">
    <property type="term" value="C:chloroplast"/>
    <property type="evidence" value="ECO:0007669"/>
    <property type="project" value="UniProtKB-SubCell"/>
</dbReference>
<dbReference type="GO" id="GO:0016881">
    <property type="term" value="F:acid-amino acid ligase activity"/>
    <property type="evidence" value="ECO:0007669"/>
    <property type="project" value="InterPro"/>
</dbReference>
<dbReference type="GO" id="GO:0005524">
    <property type="term" value="F:ATP binding"/>
    <property type="evidence" value="ECO:0007669"/>
    <property type="project" value="InterPro"/>
</dbReference>
<dbReference type="GO" id="GO:0009058">
    <property type="term" value="P:biosynthetic process"/>
    <property type="evidence" value="ECO:0007669"/>
    <property type="project" value="InterPro"/>
</dbReference>
<dbReference type="GO" id="GO:0051301">
    <property type="term" value="P:cell division"/>
    <property type="evidence" value="ECO:0007669"/>
    <property type="project" value="InterPro"/>
</dbReference>
<dbReference type="GO" id="GO:0010020">
    <property type="term" value="P:chloroplast fission"/>
    <property type="evidence" value="ECO:0007669"/>
    <property type="project" value="EnsemblPlants"/>
</dbReference>
<dbReference type="GO" id="GO:0008360">
    <property type="term" value="P:regulation of cell shape"/>
    <property type="evidence" value="ECO:0007669"/>
    <property type="project" value="InterPro"/>
</dbReference>
<dbReference type="FunFam" id="3.40.1390.10:FF:000003">
    <property type="entry name" value="UDP-N-acetylmuramoyl-L-alanyl-D-glutamate--2, 6-diaminopimelate ligase"/>
    <property type="match status" value="1"/>
</dbReference>
<dbReference type="FunFam" id="3.90.190.20:FF:000006">
    <property type="entry name" value="UDP-N-acetylmuramoyl-L-alanyl-D-glutamate--2,6-diaminopimelate ligase"/>
    <property type="match status" value="1"/>
</dbReference>
<dbReference type="Gene3D" id="3.90.190.20">
    <property type="entry name" value="Mur ligase, C-terminal domain"/>
    <property type="match status" value="1"/>
</dbReference>
<dbReference type="Gene3D" id="3.40.1190.10">
    <property type="entry name" value="Mur-like, catalytic domain"/>
    <property type="match status" value="1"/>
</dbReference>
<dbReference type="Gene3D" id="3.40.1390.10">
    <property type="entry name" value="MurE/MurF, N-terminal domain"/>
    <property type="match status" value="1"/>
</dbReference>
<dbReference type="InterPro" id="IPR036565">
    <property type="entry name" value="Mur-like_cat_sf"/>
</dbReference>
<dbReference type="InterPro" id="IPR004101">
    <property type="entry name" value="Mur_ligase_C"/>
</dbReference>
<dbReference type="InterPro" id="IPR036615">
    <property type="entry name" value="Mur_ligase_C_dom_sf"/>
</dbReference>
<dbReference type="InterPro" id="IPR013221">
    <property type="entry name" value="Mur_ligase_cen"/>
</dbReference>
<dbReference type="InterPro" id="IPR035911">
    <property type="entry name" value="MurE/MurF_N"/>
</dbReference>
<dbReference type="InterPro" id="IPR005761">
    <property type="entry name" value="UDP-N-AcMur-Glu-dNH2Pim_ligase"/>
</dbReference>
<dbReference type="NCBIfam" id="TIGR01085">
    <property type="entry name" value="murE"/>
    <property type="match status" value="1"/>
</dbReference>
<dbReference type="PANTHER" id="PTHR23135">
    <property type="entry name" value="MUR LIGASE FAMILY MEMBER"/>
    <property type="match status" value="1"/>
</dbReference>
<dbReference type="PANTHER" id="PTHR23135:SF4">
    <property type="entry name" value="UDP-N-ACETYLMURAMOYL-L-ALANYL-D-GLUTAMATE--2,6-DIAMINOPIMELATE LIGASE MURE HOMOLOG, CHLOROPLASTIC"/>
    <property type="match status" value="1"/>
</dbReference>
<dbReference type="Pfam" id="PF02875">
    <property type="entry name" value="Mur_ligase_C"/>
    <property type="match status" value="1"/>
</dbReference>
<dbReference type="Pfam" id="PF08245">
    <property type="entry name" value="Mur_ligase_M"/>
    <property type="match status" value="1"/>
</dbReference>
<dbReference type="SUPFAM" id="SSF53623">
    <property type="entry name" value="MurD-like peptide ligases, catalytic domain"/>
    <property type="match status" value="1"/>
</dbReference>
<dbReference type="SUPFAM" id="SSF53244">
    <property type="entry name" value="MurD-like peptide ligases, peptide-binding domain"/>
    <property type="match status" value="1"/>
</dbReference>
<dbReference type="SUPFAM" id="SSF63418">
    <property type="entry name" value="MurE/MurF N-terminal domain"/>
    <property type="match status" value="1"/>
</dbReference>
<organism>
    <name type="scientific">Oryza sativa subsp. japonica</name>
    <name type="common">Rice</name>
    <dbReference type="NCBI Taxonomy" id="39947"/>
    <lineage>
        <taxon>Eukaryota</taxon>
        <taxon>Viridiplantae</taxon>
        <taxon>Streptophyta</taxon>
        <taxon>Embryophyta</taxon>
        <taxon>Tracheophyta</taxon>
        <taxon>Spermatophyta</taxon>
        <taxon>Magnoliopsida</taxon>
        <taxon>Liliopsida</taxon>
        <taxon>Poales</taxon>
        <taxon>Poaceae</taxon>
        <taxon>BOP clade</taxon>
        <taxon>Oryzoideae</taxon>
        <taxon>Oryzeae</taxon>
        <taxon>Oryzinae</taxon>
        <taxon>Oryza</taxon>
        <taxon>Oryza sativa</taxon>
    </lineage>
</organism>
<gene>
    <name evidence="4" type="primary">MURE</name>
    <name evidence="7" type="ordered locus">Os10g0548900</name>
    <name evidence="6" type="ordered locus">LOC_Os10g40130</name>
    <name evidence="5" type="ORF">OSJNBa0082M15.18</name>
</gene>
<comment type="function">
    <text evidence="1">Required for the activity of the plastid-encoded RNA polymerase (PEP) and full expression of genes transcribed by PEP.</text>
</comment>
<comment type="subunit">
    <text evidence="1">Component of the plastid-encoded plastid RNA polymerase (PEP) complex.</text>
</comment>
<comment type="subcellular location">
    <subcellularLocation>
        <location evidence="2">Plastid</location>
        <location evidence="2">Chloroplast</location>
    </subcellularLocation>
</comment>
<comment type="similarity">
    <text evidence="4">Belongs to the MurCDEF family. MurE subfamily.</text>
</comment>
<reference key="1">
    <citation type="journal article" date="2003" name="Science">
        <title>In-depth view of structure, activity, and evolution of rice chromosome 10.</title>
        <authorList>
            <person name="Yu Y."/>
            <person name="Rambo T."/>
            <person name="Currie J."/>
            <person name="Saski C."/>
            <person name="Kim H.-R."/>
            <person name="Collura K."/>
            <person name="Thompson S."/>
            <person name="Simmons J."/>
            <person name="Yang T.-J."/>
            <person name="Nah G."/>
            <person name="Patel A.J."/>
            <person name="Thurmond S."/>
            <person name="Henry D."/>
            <person name="Oates R."/>
            <person name="Palmer M."/>
            <person name="Pries G."/>
            <person name="Gibson J."/>
            <person name="Anderson H."/>
            <person name="Paradkar M."/>
            <person name="Crane L."/>
            <person name="Dale J."/>
            <person name="Carver M.B."/>
            <person name="Wood T."/>
            <person name="Frisch D."/>
            <person name="Engler F."/>
            <person name="Soderlund C."/>
            <person name="Palmer L.E."/>
            <person name="Teytelman L."/>
            <person name="Nascimento L."/>
            <person name="De la Bastide M."/>
            <person name="Spiegel L."/>
            <person name="Ware D."/>
            <person name="O'Shaughnessy A."/>
            <person name="Dike S."/>
            <person name="Dedhia N."/>
            <person name="Preston R."/>
            <person name="Huang E."/>
            <person name="Ferraro K."/>
            <person name="Kuit K."/>
            <person name="Miller B."/>
            <person name="Zutavern T."/>
            <person name="Katzenberger F."/>
            <person name="Muller S."/>
            <person name="Balija V."/>
            <person name="Martienssen R.A."/>
            <person name="Stein L."/>
            <person name="Minx P."/>
            <person name="Johnson D."/>
            <person name="Cordum H."/>
            <person name="Mardis E."/>
            <person name="Cheng Z."/>
            <person name="Jiang J."/>
            <person name="Wilson R."/>
            <person name="McCombie W.R."/>
            <person name="Wing R.A."/>
            <person name="Yuan Q."/>
            <person name="Ouyang S."/>
            <person name="Liu J."/>
            <person name="Jones K.M."/>
            <person name="Gansberger K."/>
            <person name="Moffat K."/>
            <person name="Hill J."/>
            <person name="Tsitrin T."/>
            <person name="Overton L."/>
            <person name="Bera J."/>
            <person name="Kim M."/>
            <person name="Jin S."/>
            <person name="Tallon L."/>
            <person name="Ciecko A."/>
            <person name="Pai G."/>
            <person name="Van Aken S."/>
            <person name="Utterback T."/>
            <person name="Reidmuller S."/>
            <person name="Bormann J."/>
            <person name="Feldblyum T."/>
            <person name="Hsiao J."/>
            <person name="Zismann V."/>
            <person name="Blunt S."/>
            <person name="de Vazeille A.R."/>
            <person name="Shaffer T."/>
            <person name="Koo H."/>
            <person name="Suh B."/>
            <person name="Yang Q."/>
            <person name="Haas B."/>
            <person name="Peterson J."/>
            <person name="Pertea M."/>
            <person name="Volfovsky N."/>
            <person name="Wortman J."/>
            <person name="White O."/>
            <person name="Salzberg S.L."/>
            <person name="Fraser C.M."/>
            <person name="Buell C.R."/>
            <person name="Messing J."/>
            <person name="Song R."/>
            <person name="Fuks G."/>
            <person name="Llaca V."/>
            <person name="Kovchak S."/>
            <person name="Young S."/>
            <person name="Bowers J.E."/>
            <person name="Paterson A.H."/>
            <person name="Johns M.A."/>
            <person name="Mao L."/>
            <person name="Pan H."/>
            <person name="Dean R.A."/>
        </authorList>
    </citation>
    <scope>NUCLEOTIDE SEQUENCE [LARGE SCALE GENOMIC DNA]</scope>
    <source>
        <strain>cv. Nipponbare</strain>
    </source>
</reference>
<reference key="2">
    <citation type="journal article" date="2005" name="Nature">
        <title>The map-based sequence of the rice genome.</title>
        <authorList>
            <consortium name="International rice genome sequencing project (IRGSP)"/>
        </authorList>
    </citation>
    <scope>NUCLEOTIDE SEQUENCE [LARGE SCALE GENOMIC DNA]</scope>
    <source>
        <strain>cv. Nipponbare</strain>
    </source>
</reference>
<reference key="3">
    <citation type="journal article" date="2008" name="Nucleic Acids Res.">
        <title>The rice annotation project database (RAP-DB): 2008 update.</title>
        <authorList>
            <consortium name="The rice annotation project (RAP)"/>
        </authorList>
    </citation>
    <scope>GENOME REANNOTATION</scope>
    <source>
        <strain>cv. Nipponbare</strain>
    </source>
</reference>
<reference key="4">
    <citation type="journal article" date="2013" name="Rice">
        <title>Improvement of the Oryza sativa Nipponbare reference genome using next generation sequence and optical map data.</title>
        <authorList>
            <person name="Kawahara Y."/>
            <person name="de la Bastide M."/>
            <person name="Hamilton J.P."/>
            <person name="Kanamori H."/>
            <person name="McCombie W.R."/>
            <person name="Ouyang S."/>
            <person name="Schwartz D.C."/>
            <person name="Tanaka T."/>
            <person name="Wu J."/>
            <person name="Zhou S."/>
            <person name="Childs K.L."/>
            <person name="Davidson R.M."/>
            <person name="Lin H."/>
            <person name="Quesada-Ocampo L."/>
            <person name="Vaillancourt B."/>
            <person name="Sakai H."/>
            <person name="Lee S.S."/>
            <person name="Kim J."/>
            <person name="Numa H."/>
            <person name="Itoh T."/>
            <person name="Buell C.R."/>
            <person name="Matsumoto T."/>
        </authorList>
    </citation>
    <scope>GENOME REANNOTATION</scope>
    <source>
        <strain>cv. Nipponbare</strain>
    </source>
</reference>
<name>MURE_ORYSJ</name>